<proteinExistence type="inferred from homology"/>
<dbReference type="EMBL" id="CP000681">
    <property type="protein sequence ID" value="ABP75332.1"/>
    <property type="molecule type" value="Genomic_DNA"/>
</dbReference>
<dbReference type="SMR" id="A4Y5U9"/>
<dbReference type="STRING" id="319224.Sputcn32_1607"/>
<dbReference type="KEGG" id="spc:Sputcn32_1607"/>
<dbReference type="eggNOG" id="COG0823">
    <property type="taxonomic scope" value="Bacteria"/>
</dbReference>
<dbReference type="HOGENOM" id="CLU_047123_0_0_6"/>
<dbReference type="GO" id="GO:0042597">
    <property type="term" value="C:periplasmic space"/>
    <property type="evidence" value="ECO:0007669"/>
    <property type="project" value="UniProtKB-SubCell"/>
</dbReference>
<dbReference type="GO" id="GO:0051301">
    <property type="term" value="P:cell division"/>
    <property type="evidence" value="ECO:0007669"/>
    <property type="project" value="UniProtKB-UniRule"/>
</dbReference>
<dbReference type="GO" id="GO:0017038">
    <property type="term" value="P:protein import"/>
    <property type="evidence" value="ECO:0007669"/>
    <property type="project" value="InterPro"/>
</dbReference>
<dbReference type="Gene3D" id="2.120.10.30">
    <property type="entry name" value="TolB, C-terminal domain"/>
    <property type="match status" value="1"/>
</dbReference>
<dbReference type="Gene3D" id="3.40.50.10070">
    <property type="entry name" value="TolB, N-terminal domain"/>
    <property type="match status" value="1"/>
</dbReference>
<dbReference type="HAMAP" id="MF_00671">
    <property type="entry name" value="TolB"/>
    <property type="match status" value="1"/>
</dbReference>
<dbReference type="InterPro" id="IPR011042">
    <property type="entry name" value="6-blade_b-propeller_TolB-like"/>
</dbReference>
<dbReference type="InterPro" id="IPR011659">
    <property type="entry name" value="PD40"/>
</dbReference>
<dbReference type="InterPro" id="IPR014167">
    <property type="entry name" value="Tol-Pal_TolB"/>
</dbReference>
<dbReference type="InterPro" id="IPR007195">
    <property type="entry name" value="TolB_N"/>
</dbReference>
<dbReference type="NCBIfam" id="TIGR02800">
    <property type="entry name" value="propeller_TolB"/>
    <property type="match status" value="1"/>
</dbReference>
<dbReference type="PANTHER" id="PTHR36842:SF1">
    <property type="entry name" value="PROTEIN TOLB"/>
    <property type="match status" value="1"/>
</dbReference>
<dbReference type="PANTHER" id="PTHR36842">
    <property type="entry name" value="PROTEIN TOLB HOMOLOG"/>
    <property type="match status" value="1"/>
</dbReference>
<dbReference type="Pfam" id="PF07676">
    <property type="entry name" value="PD40"/>
    <property type="match status" value="4"/>
</dbReference>
<dbReference type="Pfam" id="PF04052">
    <property type="entry name" value="TolB_N"/>
    <property type="match status" value="1"/>
</dbReference>
<dbReference type="SUPFAM" id="SSF52964">
    <property type="entry name" value="TolB, N-terminal domain"/>
    <property type="match status" value="1"/>
</dbReference>
<dbReference type="SUPFAM" id="SSF69304">
    <property type="entry name" value="Tricorn protease N-terminal domain"/>
    <property type="match status" value="1"/>
</dbReference>
<name>TOLB_SHEPC</name>
<keyword id="KW-0131">Cell cycle</keyword>
<keyword id="KW-0132">Cell division</keyword>
<keyword id="KW-0574">Periplasm</keyword>
<keyword id="KW-0732">Signal</keyword>
<comment type="function">
    <text evidence="1">Part of the Tol-Pal system, which plays a role in outer membrane invagination during cell division and is important for maintaining outer membrane integrity.</text>
</comment>
<comment type="subunit">
    <text evidence="1">The Tol-Pal system is composed of five core proteins: the inner membrane proteins TolA, TolQ and TolR, the periplasmic protein TolB and the outer membrane protein Pal. They form a network linking the inner and outer membranes and the peptidoglycan layer.</text>
</comment>
<comment type="subcellular location">
    <subcellularLocation>
        <location evidence="1">Periplasm</location>
    </subcellularLocation>
</comment>
<comment type="similarity">
    <text evidence="1">Belongs to the TolB family.</text>
</comment>
<protein>
    <recommendedName>
        <fullName evidence="1">Tol-Pal system protein TolB</fullName>
    </recommendedName>
</protein>
<sequence length="442" mass="48424">MKILAKWLALAVLLCTTPTKAALDIVITEGIDAARPIAVMPFVWQGTGAPPQAIADVVMSDLVRSGTFKPLDELGLPQRNIGAVAQFQASAWGSVGAEALVLGSVKPYGTDQYLVSFDLIDLVKAQNQSLKGAVSPTEFLMDSRQTVISAAQFRQYGHRISDIVYEKLTGIRGAFLTRISYVVVNHTQKAPYQLMIADYDGFNEQMLLRSPEPLMSPTWSPDGRRLAYVSFENKKAEIFVQDLYTQVRTKVSSFPGINGAPAFSPDGKSLAVTLSKDGQPEIYVIDIATKAIKRITNHYAIDTEPSWYPDGKSLLFTSERGGKPQLYRVDLASGKVTRETFEGEWNLGGSITPDGRSMIFVNRTNGKFNIARMDLNTRFMQVLTSTRLDESPSVAPNGTMVIYGTTHQGKQVLAAVSTDGRFKARLPVGQGEVKSPSWSPFL</sequence>
<accession>A4Y5U9</accession>
<gene>
    <name evidence="1" type="primary">tolB</name>
    <name type="ordered locus">Sputcn32_1607</name>
</gene>
<evidence type="ECO:0000255" key="1">
    <source>
        <dbReference type="HAMAP-Rule" id="MF_00671"/>
    </source>
</evidence>
<organism>
    <name type="scientific">Shewanella putrefaciens (strain CN-32 / ATCC BAA-453)</name>
    <dbReference type="NCBI Taxonomy" id="319224"/>
    <lineage>
        <taxon>Bacteria</taxon>
        <taxon>Pseudomonadati</taxon>
        <taxon>Pseudomonadota</taxon>
        <taxon>Gammaproteobacteria</taxon>
        <taxon>Alteromonadales</taxon>
        <taxon>Shewanellaceae</taxon>
        <taxon>Shewanella</taxon>
    </lineage>
</organism>
<feature type="signal peptide" evidence="1">
    <location>
        <begin position="1"/>
        <end position="21"/>
    </location>
</feature>
<feature type="chain" id="PRO_5000241442" description="Tol-Pal system protein TolB" evidence="1">
    <location>
        <begin position="22"/>
        <end position="442"/>
    </location>
</feature>
<reference key="1">
    <citation type="submission" date="2007-04" db="EMBL/GenBank/DDBJ databases">
        <title>Complete sequence of Shewanella putrefaciens CN-32.</title>
        <authorList>
            <consortium name="US DOE Joint Genome Institute"/>
            <person name="Copeland A."/>
            <person name="Lucas S."/>
            <person name="Lapidus A."/>
            <person name="Barry K."/>
            <person name="Detter J.C."/>
            <person name="Glavina del Rio T."/>
            <person name="Hammon N."/>
            <person name="Israni S."/>
            <person name="Dalin E."/>
            <person name="Tice H."/>
            <person name="Pitluck S."/>
            <person name="Chain P."/>
            <person name="Malfatti S."/>
            <person name="Shin M."/>
            <person name="Vergez L."/>
            <person name="Schmutz J."/>
            <person name="Larimer F."/>
            <person name="Land M."/>
            <person name="Hauser L."/>
            <person name="Kyrpides N."/>
            <person name="Mikhailova N."/>
            <person name="Romine M.F."/>
            <person name="Fredrickson J."/>
            <person name="Tiedje J."/>
            <person name="Richardson P."/>
        </authorList>
    </citation>
    <scope>NUCLEOTIDE SEQUENCE [LARGE SCALE GENOMIC DNA]</scope>
    <source>
        <strain>CN-32 / ATCC BAA-453</strain>
    </source>
</reference>